<reference key="1">
    <citation type="journal article" date="2001" name="Science">
        <title>Mechanisms of evolution in Rickettsia conorii and R. prowazekii.</title>
        <authorList>
            <person name="Ogata H."/>
            <person name="Audic S."/>
            <person name="Renesto-Audiffren P."/>
            <person name="Fournier P.-E."/>
            <person name="Barbe V."/>
            <person name="Samson D."/>
            <person name="Roux V."/>
            <person name="Cossart P."/>
            <person name="Weissenbach J."/>
            <person name="Claverie J.-M."/>
            <person name="Raoult D."/>
        </authorList>
    </citation>
    <scope>NUCLEOTIDE SEQUENCE [LARGE SCALE GENOMIC DNA]</scope>
    <source>
        <strain>ATCC VR-613 / Malish 7</strain>
    </source>
</reference>
<sequence>MTDKSSSNLVPVNIEDEMKVSYLDYAMSVIVSRAIPDVRDGLKPVHRRIIYSMHEAGNHASKPYRKSARIVGDVMGKYHPHGDSAIYDALVRMAQDFSLRLPLVDGQGNFGSMDGDAAAAMRYTESRMAKVSYKLVEDIDKETVSFNPNYDGSEEEPSVLPAMFPNLLVNGSGGIAVGMATNIPPHNLGEVIDACCLYIDNNDIEILDLLEVVKGPDFPTGSMILGISGIRSAYLTGRGSIIMRGRAEIENIGNNRQAIIITEIPYMVNKARLVEKIAEMVKEKRIEGISDLRDESNKNGVRIFIELKKDVVAEVVLNQIYACTQLQTSFGVIMLALKDGLPKVMNLKEVIAAFVSFREVVITNRTIYLLNKARDRAHILLGLTIAVSNIDEIIRIIKASNDSNAAKQELMARQWEALNILPLVKLVDDKAMLNEQGKCNFTEVQAKAILEMRLQRLTAMEKNKLEEDLKNLITEITEYLNILGSRTRLLEILKEELIKVKEEFATPRLTSIEFGEFDQDIEDLIQREEMVVTVTLGGYIKRVPLSSYRAQKRGGKGRSGLSMRDEDITTQVFVGSTHTPMLFFSNIGQVYSLKLYKLPLSNPQGKGRPMVNILPLKANEHITNIMPLPENQDERDNLNIMFATAKGNIRRSDLLDFKKLQSNGKIAIRLDEDDKLIDVKPCKEDEHILLATKAGKALRFPVESLRVIKSRTSDGVRGMKLAKEDSVISMTVLKGISSTKEDRDAYLSVPWEQRLEIAKGEAFNPEELGVSLTAPAIVEMANSEEFILTVTENGFGKRSSAYGYRITDRGGSGIINMDINDKTGLVVGVMPVKMDDELMLITNSGKLIRCKLESVRITGRNTSGVILFKLDDGEKVVSVSLIAETAESEEDSELEEEGLEQSEEV</sequence>
<accession>Q92IZ6</accession>
<organism>
    <name type="scientific">Rickettsia conorii (strain ATCC VR-613 / Malish 7)</name>
    <dbReference type="NCBI Taxonomy" id="272944"/>
    <lineage>
        <taxon>Bacteria</taxon>
        <taxon>Pseudomonadati</taxon>
        <taxon>Pseudomonadota</taxon>
        <taxon>Alphaproteobacteria</taxon>
        <taxon>Rickettsiales</taxon>
        <taxon>Rickettsiaceae</taxon>
        <taxon>Rickettsieae</taxon>
        <taxon>Rickettsia</taxon>
        <taxon>spotted fever group</taxon>
    </lineage>
</organism>
<protein>
    <recommendedName>
        <fullName evidence="1">DNA gyrase subunit A</fullName>
        <ecNumber evidence="1">5.6.2.2</ecNumber>
    </recommendedName>
</protein>
<feature type="chain" id="PRO_0000145246" description="DNA gyrase subunit A">
    <location>
        <begin position="1"/>
        <end position="905"/>
    </location>
</feature>
<feature type="domain" description="Topo IIA-type catalytic" evidence="2">
    <location>
        <begin position="35"/>
        <end position="524"/>
    </location>
</feature>
<feature type="region of interest" description="Disordered" evidence="3">
    <location>
        <begin position="885"/>
        <end position="905"/>
    </location>
</feature>
<feature type="short sequence motif" description="GyrA-box" evidence="1">
    <location>
        <begin position="551"/>
        <end position="557"/>
    </location>
</feature>
<feature type="compositionally biased region" description="Acidic residues" evidence="3">
    <location>
        <begin position="886"/>
        <end position="905"/>
    </location>
</feature>
<feature type="active site" description="O-(5'-phospho-DNA)-tyrosine intermediate" evidence="1">
    <location>
        <position position="123"/>
    </location>
</feature>
<gene>
    <name evidence="1" type="primary">gyrA</name>
    <name type="ordered locus">RC0273</name>
</gene>
<dbReference type="EC" id="5.6.2.2" evidence="1"/>
<dbReference type="EMBL" id="AE006914">
    <property type="protein sequence ID" value="AAL02811.1"/>
    <property type="molecule type" value="Genomic_DNA"/>
</dbReference>
<dbReference type="PIR" id="A97734">
    <property type="entry name" value="A97734"/>
</dbReference>
<dbReference type="RefSeq" id="WP_010976933.1">
    <property type="nucleotide sequence ID" value="NC_003103.1"/>
</dbReference>
<dbReference type="SMR" id="Q92IZ6"/>
<dbReference type="GeneID" id="927904"/>
<dbReference type="KEGG" id="rco:RC0273"/>
<dbReference type="PATRIC" id="fig|272944.4.peg.310"/>
<dbReference type="HOGENOM" id="CLU_002977_6_1_5"/>
<dbReference type="Proteomes" id="UP000000816">
    <property type="component" value="Chromosome"/>
</dbReference>
<dbReference type="GO" id="GO:0005694">
    <property type="term" value="C:chromosome"/>
    <property type="evidence" value="ECO:0007669"/>
    <property type="project" value="InterPro"/>
</dbReference>
<dbReference type="GO" id="GO:0005737">
    <property type="term" value="C:cytoplasm"/>
    <property type="evidence" value="ECO:0007669"/>
    <property type="project" value="UniProtKB-SubCell"/>
</dbReference>
<dbReference type="GO" id="GO:0009330">
    <property type="term" value="C:DNA topoisomerase type II (double strand cut, ATP-hydrolyzing) complex"/>
    <property type="evidence" value="ECO:0007669"/>
    <property type="project" value="TreeGrafter"/>
</dbReference>
<dbReference type="GO" id="GO:0005524">
    <property type="term" value="F:ATP binding"/>
    <property type="evidence" value="ECO:0007669"/>
    <property type="project" value="UniProtKB-UniRule"/>
</dbReference>
<dbReference type="GO" id="GO:0003677">
    <property type="term" value="F:DNA binding"/>
    <property type="evidence" value="ECO:0007669"/>
    <property type="project" value="UniProtKB-UniRule"/>
</dbReference>
<dbReference type="GO" id="GO:0034335">
    <property type="term" value="F:DNA negative supercoiling activity"/>
    <property type="evidence" value="ECO:0007669"/>
    <property type="project" value="UniProtKB-ARBA"/>
</dbReference>
<dbReference type="GO" id="GO:0006265">
    <property type="term" value="P:DNA topological change"/>
    <property type="evidence" value="ECO:0007669"/>
    <property type="project" value="UniProtKB-UniRule"/>
</dbReference>
<dbReference type="GO" id="GO:0006261">
    <property type="term" value="P:DNA-templated DNA replication"/>
    <property type="evidence" value="ECO:0007669"/>
    <property type="project" value="UniProtKB-UniRule"/>
</dbReference>
<dbReference type="CDD" id="cd00187">
    <property type="entry name" value="TOP4c"/>
    <property type="match status" value="1"/>
</dbReference>
<dbReference type="FunFam" id="1.10.268.10:FF:000001">
    <property type="entry name" value="DNA gyrase subunit A"/>
    <property type="match status" value="1"/>
</dbReference>
<dbReference type="FunFam" id="3.30.1360.40:FF:000002">
    <property type="entry name" value="DNA gyrase subunit A"/>
    <property type="match status" value="1"/>
</dbReference>
<dbReference type="FunFam" id="3.90.199.10:FF:000001">
    <property type="entry name" value="DNA gyrase subunit A"/>
    <property type="match status" value="1"/>
</dbReference>
<dbReference type="Gene3D" id="3.30.1360.40">
    <property type="match status" value="1"/>
</dbReference>
<dbReference type="Gene3D" id="2.120.10.90">
    <property type="entry name" value="DNA gyrase/topoisomerase IV, subunit A, C-terminal"/>
    <property type="match status" value="1"/>
</dbReference>
<dbReference type="Gene3D" id="3.90.199.10">
    <property type="entry name" value="Topoisomerase II, domain 5"/>
    <property type="match status" value="1"/>
</dbReference>
<dbReference type="Gene3D" id="1.10.268.10">
    <property type="entry name" value="Topoisomerase, domain 3"/>
    <property type="match status" value="1"/>
</dbReference>
<dbReference type="HAMAP" id="MF_01897">
    <property type="entry name" value="GyrA"/>
    <property type="match status" value="1"/>
</dbReference>
<dbReference type="InterPro" id="IPR005743">
    <property type="entry name" value="GyrA"/>
</dbReference>
<dbReference type="InterPro" id="IPR006691">
    <property type="entry name" value="GyrA/parC_rep"/>
</dbReference>
<dbReference type="InterPro" id="IPR035516">
    <property type="entry name" value="Gyrase/topoIV_suA_C"/>
</dbReference>
<dbReference type="InterPro" id="IPR013760">
    <property type="entry name" value="Topo_IIA-like_dom_sf"/>
</dbReference>
<dbReference type="InterPro" id="IPR013758">
    <property type="entry name" value="Topo_IIA_A/C_ab"/>
</dbReference>
<dbReference type="InterPro" id="IPR013757">
    <property type="entry name" value="Topo_IIA_A_a_sf"/>
</dbReference>
<dbReference type="InterPro" id="IPR002205">
    <property type="entry name" value="Topo_IIA_dom_A"/>
</dbReference>
<dbReference type="InterPro" id="IPR050220">
    <property type="entry name" value="Type_II_DNA_Topoisomerases"/>
</dbReference>
<dbReference type="NCBIfam" id="TIGR01063">
    <property type="entry name" value="gyrA"/>
    <property type="match status" value="1"/>
</dbReference>
<dbReference type="NCBIfam" id="NF004043">
    <property type="entry name" value="PRK05560.1"/>
    <property type="match status" value="1"/>
</dbReference>
<dbReference type="NCBIfam" id="NF004044">
    <property type="entry name" value="PRK05561.1"/>
    <property type="match status" value="1"/>
</dbReference>
<dbReference type="PANTHER" id="PTHR43493:SF5">
    <property type="entry name" value="DNA GYRASE SUBUNIT A, CHLOROPLASTIC_MITOCHONDRIAL"/>
    <property type="match status" value="1"/>
</dbReference>
<dbReference type="PANTHER" id="PTHR43493">
    <property type="entry name" value="DNA GYRASE/TOPOISOMERASE SUBUNIT A"/>
    <property type="match status" value="1"/>
</dbReference>
<dbReference type="Pfam" id="PF03989">
    <property type="entry name" value="DNA_gyraseA_C"/>
    <property type="match status" value="6"/>
</dbReference>
<dbReference type="Pfam" id="PF00521">
    <property type="entry name" value="DNA_topoisoIV"/>
    <property type="match status" value="1"/>
</dbReference>
<dbReference type="SMART" id="SM00434">
    <property type="entry name" value="TOP4c"/>
    <property type="match status" value="1"/>
</dbReference>
<dbReference type="SUPFAM" id="SSF101904">
    <property type="entry name" value="GyrA/ParC C-terminal domain-like"/>
    <property type="match status" value="1"/>
</dbReference>
<dbReference type="SUPFAM" id="SSF56719">
    <property type="entry name" value="Type II DNA topoisomerase"/>
    <property type="match status" value="1"/>
</dbReference>
<dbReference type="PROSITE" id="PS52040">
    <property type="entry name" value="TOPO_IIA"/>
    <property type="match status" value="1"/>
</dbReference>
<keyword id="KW-0067">ATP-binding</keyword>
<keyword id="KW-0963">Cytoplasm</keyword>
<keyword id="KW-0238">DNA-binding</keyword>
<keyword id="KW-0413">Isomerase</keyword>
<keyword id="KW-0547">Nucleotide-binding</keyword>
<keyword id="KW-0799">Topoisomerase</keyword>
<evidence type="ECO:0000255" key="1">
    <source>
        <dbReference type="HAMAP-Rule" id="MF_01897"/>
    </source>
</evidence>
<evidence type="ECO:0000255" key="2">
    <source>
        <dbReference type="PROSITE-ProRule" id="PRU01384"/>
    </source>
</evidence>
<evidence type="ECO:0000256" key="3">
    <source>
        <dbReference type="SAM" id="MobiDB-lite"/>
    </source>
</evidence>
<proteinExistence type="inferred from homology"/>
<name>GYRA_RICCN</name>
<comment type="function">
    <text evidence="1">A type II topoisomerase that negatively supercoils closed circular double-stranded (ds) DNA in an ATP-dependent manner to modulate DNA topology and maintain chromosomes in an underwound state. Negative supercoiling favors strand separation, and DNA replication, transcription, recombination and repair, all of which involve strand separation. Also able to catalyze the interconversion of other topological isomers of dsDNA rings, including catenanes and knotted rings. Type II topoisomerases break and join 2 DNA strands simultaneously in an ATP-dependent manner.</text>
</comment>
<comment type="catalytic activity">
    <reaction evidence="1">
        <text>ATP-dependent breakage, passage and rejoining of double-stranded DNA.</text>
        <dbReference type="EC" id="5.6.2.2"/>
    </reaction>
</comment>
<comment type="subunit">
    <text evidence="1">Heterotetramer, composed of two GyrA and two GyrB chains. In the heterotetramer, GyrA contains the active site tyrosine that forms a transient covalent intermediate with DNA, while GyrB binds cofactors and catalyzes ATP hydrolysis.</text>
</comment>
<comment type="subcellular location">
    <subcellularLocation>
        <location evidence="1">Cytoplasm</location>
    </subcellularLocation>
</comment>
<comment type="miscellaneous">
    <text evidence="1">Few gyrases are as efficient as E.coli at forming negative supercoils. Not all organisms have 2 type II topoisomerases; in organisms with a single type II topoisomerase this enzyme also has to decatenate newly replicated chromosomes.</text>
</comment>
<comment type="similarity">
    <text evidence="1">Belongs to the type II topoisomerase GyrA/ParC subunit family.</text>
</comment>